<accession>Q4UN66</accession>
<name>RL9_RICFE</name>
<keyword id="KW-0687">Ribonucleoprotein</keyword>
<keyword id="KW-0689">Ribosomal protein</keyword>
<keyword id="KW-0694">RNA-binding</keyword>
<keyword id="KW-0699">rRNA-binding</keyword>
<reference key="1">
    <citation type="journal article" date="2005" name="PLoS Biol.">
        <title>The genome sequence of Rickettsia felis identifies the first putative conjugative plasmid in an obligate intracellular parasite.</title>
        <authorList>
            <person name="Ogata H."/>
            <person name="Renesto P."/>
            <person name="Audic S."/>
            <person name="Robert C."/>
            <person name="Blanc G."/>
            <person name="Fournier P.-E."/>
            <person name="Parinello H."/>
            <person name="Claverie J.-M."/>
            <person name="Raoult D."/>
        </authorList>
    </citation>
    <scope>NUCLEOTIDE SEQUENCE [LARGE SCALE GENOMIC DNA]</scope>
    <source>
        <strain>ATCC VR-1525 / URRWXCal2</strain>
    </source>
</reference>
<gene>
    <name evidence="1" type="primary">rplI</name>
    <name type="ordered locus">RF_0141</name>
</gene>
<sequence length="171" mass="19436">MEIILIKPVRKLGKIGDMLKVADGFGRNYLLPQKLAIRATEPNKELIVKQKHEFEAKDKQIREEVEKINALIKDQKLVFIRQTSDDGKLFGSVTNKEIADKLSENVSYNIAHSNIILDKQIKFTGIYTVEIRLHAELNAIVTVIVARSESEAQDYLREQKTETSEDLAESA</sequence>
<protein>
    <recommendedName>
        <fullName evidence="1">Large ribosomal subunit protein bL9</fullName>
    </recommendedName>
    <alternativeName>
        <fullName evidence="2">50S ribosomal protein L9</fullName>
    </alternativeName>
</protein>
<comment type="function">
    <text evidence="1">Binds to the 23S rRNA.</text>
</comment>
<comment type="similarity">
    <text evidence="1">Belongs to the bacterial ribosomal protein bL9 family.</text>
</comment>
<organism>
    <name type="scientific">Rickettsia felis (strain ATCC VR-1525 / URRWXCal2)</name>
    <name type="common">Rickettsia azadi</name>
    <dbReference type="NCBI Taxonomy" id="315456"/>
    <lineage>
        <taxon>Bacteria</taxon>
        <taxon>Pseudomonadati</taxon>
        <taxon>Pseudomonadota</taxon>
        <taxon>Alphaproteobacteria</taxon>
        <taxon>Rickettsiales</taxon>
        <taxon>Rickettsiaceae</taxon>
        <taxon>Rickettsieae</taxon>
        <taxon>Rickettsia</taxon>
        <taxon>spotted fever group</taxon>
    </lineage>
</organism>
<evidence type="ECO:0000255" key="1">
    <source>
        <dbReference type="HAMAP-Rule" id="MF_00503"/>
    </source>
</evidence>
<evidence type="ECO:0000305" key="2"/>
<feature type="chain" id="PRO_0000236579" description="Large ribosomal subunit protein bL9">
    <location>
        <begin position="1"/>
        <end position="171"/>
    </location>
</feature>
<proteinExistence type="inferred from homology"/>
<dbReference type="EMBL" id="CP000053">
    <property type="protein sequence ID" value="AAY60992.1"/>
    <property type="molecule type" value="Genomic_DNA"/>
</dbReference>
<dbReference type="SMR" id="Q4UN66"/>
<dbReference type="STRING" id="315456.RF_0141"/>
<dbReference type="KEGG" id="rfe:RF_0141"/>
<dbReference type="eggNOG" id="COG0359">
    <property type="taxonomic scope" value="Bacteria"/>
</dbReference>
<dbReference type="HOGENOM" id="CLU_078938_1_0_5"/>
<dbReference type="OrthoDB" id="9788336at2"/>
<dbReference type="Proteomes" id="UP000008548">
    <property type="component" value="Chromosome"/>
</dbReference>
<dbReference type="GO" id="GO:1990904">
    <property type="term" value="C:ribonucleoprotein complex"/>
    <property type="evidence" value="ECO:0007669"/>
    <property type="project" value="UniProtKB-KW"/>
</dbReference>
<dbReference type="GO" id="GO:0005840">
    <property type="term" value="C:ribosome"/>
    <property type="evidence" value="ECO:0007669"/>
    <property type="project" value="UniProtKB-KW"/>
</dbReference>
<dbReference type="GO" id="GO:0019843">
    <property type="term" value="F:rRNA binding"/>
    <property type="evidence" value="ECO:0007669"/>
    <property type="project" value="UniProtKB-UniRule"/>
</dbReference>
<dbReference type="GO" id="GO:0003735">
    <property type="term" value="F:structural constituent of ribosome"/>
    <property type="evidence" value="ECO:0007669"/>
    <property type="project" value="InterPro"/>
</dbReference>
<dbReference type="GO" id="GO:0006412">
    <property type="term" value="P:translation"/>
    <property type="evidence" value="ECO:0007669"/>
    <property type="project" value="UniProtKB-UniRule"/>
</dbReference>
<dbReference type="Gene3D" id="3.10.430.100">
    <property type="entry name" value="Ribosomal protein L9, C-terminal domain"/>
    <property type="match status" value="1"/>
</dbReference>
<dbReference type="Gene3D" id="3.40.5.10">
    <property type="entry name" value="Ribosomal protein L9, N-terminal domain"/>
    <property type="match status" value="1"/>
</dbReference>
<dbReference type="HAMAP" id="MF_00503">
    <property type="entry name" value="Ribosomal_bL9"/>
    <property type="match status" value="1"/>
</dbReference>
<dbReference type="InterPro" id="IPR000244">
    <property type="entry name" value="Ribosomal_bL9"/>
</dbReference>
<dbReference type="InterPro" id="IPR009027">
    <property type="entry name" value="Ribosomal_bL9/RNase_H1_N"/>
</dbReference>
<dbReference type="InterPro" id="IPR020594">
    <property type="entry name" value="Ribosomal_bL9_bac/chp"/>
</dbReference>
<dbReference type="InterPro" id="IPR020069">
    <property type="entry name" value="Ribosomal_bL9_C"/>
</dbReference>
<dbReference type="InterPro" id="IPR036791">
    <property type="entry name" value="Ribosomal_bL9_C_sf"/>
</dbReference>
<dbReference type="InterPro" id="IPR020070">
    <property type="entry name" value="Ribosomal_bL9_N"/>
</dbReference>
<dbReference type="InterPro" id="IPR036935">
    <property type="entry name" value="Ribosomal_bL9_N_sf"/>
</dbReference>
<dbReference type="NCBIfam" id="TIGR00158">
    <property type="entry name" value="L9"/>
    <property type="match status" value="1"/>
</dbReference>
<dbReference type="PANTHER" id="PTHR21368">
    <property type="entry name" value="50S RIBOSOMAL PROTEIN L9"/>
    <property type="match status" value="1"/>
</dbReference>
<dbReference type="Pfam" id="PF03948">
    <property type="entry name" value="Ribosomal_L9_C"/>
    <property type="match status" value="1"/>
</dbReference>
<dbReference type="Pfam" id="PF01281">
    <property type="entry name" value="Ribosomal_L9_N"/>
    <property type="match status" value="1"/>
</dbReference>
<dbReference type="SUPFAM" id="SSF55658">
    <property type="entry name" value="L9 N-domain-like"/>
    <property type="match status" value="1"/>
</dbReference>
<dbReference type="SUPFAM" id="SSF55653">
    <property type="entry name" value="Ribosomal protein L9 C-domain"/>
    <property type="match status" value="1"/>
</dbReference>
<dbReference type="PROSITE" id="PS00651">
    <property type="entry name" value="RIBOSOMAL_L9"/>
    <property type="match status" value="1"/>
</dbReference>